<evidence type="ECO:0000256" key="1">
    <source>
        <dbReference type="SAM" id="MobiDB-lite"/>
    </source>
</evidence>
<evidence type="ECO:0000269" key="2">
    <source>
    </source>
</evidence>
<dbReference type="EMBL" id="CU329671">
    <property type="protein sequence ID" value="CAB46755.1"/>
    <property type="molecule type" value="Genomic_DNA"/>
</dbReference>
<dbReference type="PIR" id="T39416">
    <property type="entry name" value="T39416"/>
</dbReference>
<dbReference type="RefSeq" id="NP_595391.1">
    <property type="nucleotide sequence ID" value="NM_001021298.2"/>
</dbReference>
<dbReference type="BioGRID" id="276442">
    <property type="interactions" value="5"/>
</dbReference>
<dbReference type="PaxDb" id="4896-SPBC146.02.1"/>
<dbReference type="EnsemblFungi" id="SPBC146.02.1">
    <property type="protein sequence ID" value="SPBC146.02.1:pep"/>
    <property type="gene ID" value="SPBC146.02"/>
</dbReference>
<dbReference type="KEGG" id="spo:2539896"/>
<dbReference type="PomBase" id="SPBC146.02"/>
<dbReference type="VEuPathDB" id="FungiDB:SPBC146.02"/>
<dbReference type="HOGENOM" id="CLU_1078323_0_0_1"/>
<dbReference type="InParanoid" id="Q9Y807"/>
<dbReference type="OMA" id="TEYHGWE"/>
<dbReference type="PRO" id="PR:Q9Y807"/>
<dbReference type="Proteomes" id="UP000002485">
    <property type="component" value="Chromosome II"/>
</dbReference>
<dbReference type="GO" id="GO:0005739">
    <property type="term" value="C:mitochondrion"/>
    <property type="evidence" value="ECO:0007005"/>
    <property type="project" value="PomBase"/>
</dbReference>
<feature type="chain" id="PRO_0000304098" description="Uncharacterized protein C146.02">
    <location>
        <begin position="1"/>
        <end position="263"/>
    </location>
</feature>
<feature type="region of interest" description="Disordered" evidence="1">
    <location>
        <begin position="22"/>
        <end position="44"/>
    </location>
</feature>
<feature type="compositionally biased region" description="Low complexity" evidence="1">
    <location>
        <begin position="34"/>
        <end position="43"/>
    </location>
</feature>
<comment type="subcellular location">
    <subcellularLocation>
        <location evidence="2">Mitochondrion</location>
    </subcellularLocation>
</comment>
<protein>
    <recommendedName>
        <fullName>Uncharacterized protein C146.02</fullName>
    </recommendedName>
</protein>
<keyword id="KW-0496">Mitochondrion</keyword>
<keyword id="KW-1185">Reference proteome</keyword>
<organism>
    <name type="scientific">Schizosaccharomyces pombe (strain 972 / ATCC 24843)</name>
    <name type="common">Fission yeast</name>
    <dbReference type="NCBI Taxonomy" id="284812"/>
    <lineage>
        <taxon>Eukaryota</taxon>
        <taxon>Fungi</taxon>
        <taxon>Dikarya</taxon>
        <taxon>Ascomycota</taxon>
        <taxon>Taphrinomycotina</taxon>
        <taxon>Schizosaccharomycetes</taxon>
        <taxon>Schizosaccharomycetales</taxon>
        <taxon>Schizosaccharomycetaceae</taxon>
        <taxon>Schizosaccharomyces</taxon>
    </lineage>
</organism>
<accession>Q9Y807</accession>
<reference key="1">
    <citation type="journal article" date="2002" name="Nature">
        <title>The genome sequence of Schizosaccharomyces pombe.</title>
        <authorList>
            <person name="Wood V."/>
            <person name="Gwilliam R."/>
            <person name="Rajandream M.A."/>
            <person name="Lyne M.H."/>
            <person name="Lyne R."/>
            <person name="Stewart A."/>
            <person name="Sgouros J.G."/>
            <person name="Peat N."/>
            <person name="Hayles J."/>
            <person name="Baker S.G."/>
            <person name="Basham D."/>
            <person name="Bowman S."/>
            <person name="Brooks K."/>
            <person name="Brown D."/>
            <person name="Brown S."/>
            <person name="Chillingworth T."/>
            <person name="Churcher C.M."/>
            <person name="Collins M."/>
            <person name="Connor R."/>
            <person name="Cronin A."/>
            <person name="Davis P."/>
            <person name="Feltwell T."/>
            <person name="Fraser A."/>
            <person name="Gentles S."/>
            <person name="Goble A."/>
            <person name="Hamlin N."/>
            <person name="Harris D.E."/>
            <person name="Hidalgo J."/>
            <person name="Hodgson G."/>
            <person name="Holroyd S."/>
            <person name="Hornsby T."/>
            <person name="Howarth S."/>
            <person name="Huckle E.J."/>
            <person name="Hunt S."/>
            <person name="Jagels K."/>
            <person name="James K.D."/>
            <person name="Jones L."/>
            <person name="Jones M."/>
            <person name="Leather S."/>
            <person name="McDonald S."/>
            <person name="McLean J."/>
            <person name="Mooney P."/>
            <person name="Moule S."/>
            <person name="Mungall K.L."/>
            <person name="Murphy L.D."/>
            <person name="Niblett D."/>
            <person name="Odell C."/>
            <person name="Oliver K."/>
            <person name="O'Neil S."/>
            <person name="Pearson D."/>
            <person name="Quail M.A."/>
            <person name="Rabbinowitsch E."/>
            <person name="Rutherford K.M."/>
            <person name="Rutter S."/>
            <person name="Saunders D."/>
            <person name="Seeger K."/>
            <person name="Sharp S."/>
            <person name="Skelton J."/>
            <person name="Simmonds M.N."/>
            <person name="Squares R."/>
            <person name="Squares S."/>
            <person name="Stevens K."/>
            <person name="Taylor K."/>
            <person name="Taylor R.G."/>
            <person name="Tivey A."/>
            <person name="Walsh S.V."/>
            <person name="Warren T."/>
            <person name="Whitehead S."/>
            <person name="Woodward J.R."/>
            <person name="Volckaert G."/>
            <person name="Aert R."/>
            <person name="Robben J."/>
            <person name="Grymonprez B."/>
            <person name="Weltjens I."/>
            <person name="Vanstreels E."/>
            <person name="Rieger M."/>
            <person name="Schaefer M."/>
            <person name="Mueller-Auer S."/>
            <person name="Gabel C."/>
            <person name="Fuchs M."/>
            <person name="Duesterhoeft A."/>
            <person name="Fritzc C."/>
            <person name="Holzer E."/>
            <person name="Moestl D."/>
            <person name="Hilbert H."/>
            <person name="Borzym K."/>
            <person name="Langer I."/>
            <person name="Beck A."/>
            <person name="Lehrach H."/>
            <person name="Reinhardt R."/>
            <person name="Pohl T.M."/>
            <person name="Eger P."/>
            <person name="Zimmermann W."/>
            <person name="Wedler H."/>
            <person name="Wambutt R."/>
            <person name="Purnelle B."/>
            <person name="Goffeau A."/>
            <person name="Cadieu E."/>
            <person name="Dreano S."/>
            <person name="Gloux S."/>
            <person name="Lelaure V."/>
            <person name="Mottier S."/>
            <person name="Galibert F."/>
            <person name="Aves S.J."/>
            <person name="Xiang Z."/>
            <person name="Hunt C."/>
            <person name="Moore K."/>
            <person name="Hurst S.M."/>
            <person name="Lucas M."/>
            <person name="Rochet M."/>
            <person name="Gaillardin C."/>
            <person name="Tallada V.A."/>
            <person name="Garzon A."/>
            <person name="Thode G."/>
            <person name="Daga R.R."/>
            <person name="Cruzado L."/>
            <person name="Jimenez J."/>
            <person name="Sanchez M."/>
            <person name="del Rey F."/>
            <person name="Benito J."/>
            <person name="Dominguez A."/>
            <person name="Revuelta J.L."/>
            <person name="Moreno S."/>
            <person name="Armstrong J."/>
            <person name="Forsburg S.L."/>
            <person name="Cerutti L."/>
            <person name="Lowe T."/>
            <person name="McCombie W.R."/>
            <person name="Paulsen I."/>
            <person name="Potashkin J."/>
            <person name="Shpakovski G.V."/>
            <person name="Ussery D."/>
            <person name="Barrell B.G."/>
            <person name="Nurse P."/>
        </authorList>
    </citation>
    <scope>NUCLEOTIDE SEQUENCE [LARGE SCALE GENOMIC DNA]</scope>
    <source>
        <strain>972 / ATCC 24843</strain>
    </source>
</reference>
<reference key="2">
    <citation type="journal article" date="2006" name="Nat. Biotechnol.">
        <title>ORFeome cloning and global analysis of protein localization in the fission yeast Schizosaccharomyces pombe.</title>
        <authorList>
            <person name="Matsuyama A."/>
            <person name="Arai R."/>
            <person name="Yashiroda Y."/>
            <person name="Shirai A."/>
            <person name="Kamata A."/>
            <person name="Sekido S."/>
            <person name="Kobayashi Y."/>
            <person name="Hashimoto A."/>
            <person name="Hamamoto M."/>
            <person name="Hiraoka Y."/>
            <person name="Horinouchi S."/>
            <person name="Yoshida M."/>
        </authorList>
    </citation>
    <scope>SUBCELLULAR LOCATION [LARGE SCALE ANALYSIS]</scope>
</reference>
<sequence length="263" mass="29325">MNGIRKKPATLQLHNIKTSCFIDGSDDQSDRTRSSSGDSTSNSLKLSHHISDELINAIYKELKSPVSPWDKNISQHSPWLLEAASNSIGDSSPLLSPISPLKLRFHKYSVSKQLNSVGKQGFGLSSNHSRYASPSSPARLARGALGEELSNSQYRLECAAIQKLVAQKRANRRSSKSTLKNSANDIEFFDIEEVSSRKGLIDRTPSKRNVTSRVSDAYSRLKSAVKGESSLSFKRNRSKSKRKIQHLGLTEFNGWEHHQCDWL</sequence>
<proteinExistence type="predicted"/>
<gene>
    <name type="ORF">SPBC146.02</name>
</gene>
<name>YN92_SCHPO</name>